<accession>C4LCM6</accession>
<reference key="1">
    <citation type="submission" date="2009-05" db="EMBL/GenBank/DDBJ databases">
        <title>Complete sequence of Tolumonas auensis DSM 9187.</title>
        <authorList>
            <consortium name="US DOE Joint Genome Institute"/>
            <person name="Lucas S."/>
            <person name="Copeland A."/>
            <person name="Lapidus A."/>
            <person name="Glavina del Rio T."/>
            <person name="Tice H."/>
            <person name="Bruce D."/>
            <person name="Goodwin L."/>
            <person name="Pitluck S."/>
            <person name="Chertkov O."/>
            <person name="Brettin T."/>
            <person name="Detter J.C."/>
            <person name="Han C."/>
            <person name="Larimer F."/>
            <person name="Land M."/>
            <person name="Hauser L."/>
            <person name="Kyrpides N."/>
            <person name="Mikhailova N."/>
            <person name="Spring S."/>
            <person name="Beller H."/>
        </authorList>
    </citation>
    <scope>NUCLEOTIDE SEQUENCE [LARGE SCALE GENOMIC DNA]</scope>
    <source>
        <strain>DSM 9187 / NBRC 110442 / TA 4</strain>
    </source>
</reference>
<feature type="chain" id="PRO_1000212358" description="UPF0235 protein Tola_0962">
    <location>
        <begin position="1"/>
        <end position="96"/>
    </location>
</feature>
<evidence type="ECO:0000255" key="1">
    <source>
        <dbReference type="HAMAP-Rule" id="MF_00634"/>
    </source>
</evidence>
<sequence length="96" mass="10766">MAGFRKENDEVWLDVYIQPKASRDQIQGWHGEELKIAITAPPVDGQANAHLIKFLAKQFKVAKSQIVIHKGELGRHKTVRITSPQQLPAILDQSAD</sequence>
<name>Y962_TOLAT</name>
<gene>
    <name type="ordered locus">Tola_0962</name>
</gene>
<dbReference type="EMBL" id="CP001616">
    <property type="protein sequence ID" value="ACQ92590.1"/>
    <property type="molecule type" value="Genomic_DNA"/>
</dbReference>
<dbReference type="RefSeq" id="WP_012729189.1">
    <property type="nucleotide sequence ID" value="NC_012691.1"/>
</dbReference>
<dbReference type="SMR" id="C4LCM6"/>
<dbReference type="STRING" id="595494.Tola_0962"/>
<dbReference type="KEGG" id="tau:Tola_0962"/>
<dbReference type="eggNOG" id="COG1872">
    <property type="taxonomic scope" value="Bacteria"/>
</dbReference>
<dbReference type="HOGENOM" id="CLU_130694_5_0_6"/>
<dbReference type="OrthoDB" id="9800587at2"/>
<dbReference type="Proteomes" id="UP000009073">
    <property type="component" value="Chromosome"/>
</dbReference>
<dbReference type="GO" id="GO:0005737">
    <property type="term" value="C:cytoplasm"/>
    <property type="evidence" value="ECO:0007669"/>
    <property type="project" value="TreeGrafter"/>
</dbReference>
<dbReference type="Gene3D" id="3.30.1200.10">
    <property type="entry name" value="YggU-like"/>
    <property type="match status" value="1"/>
</dbReference>
<dbReference type="HAMAP" id="MF_00634">
    <property type="entry name" value="UPF0235"/>
    <property type="match status" value="1"/>
</dbReference>
<dbReference type="InterPro" id="IPR003746">
    <property type="entry name" value="DUF167"/>
</dbReference>
<dbReference type="InterPro" id="IPR036591">
    <property type="entry name" value="YggU-like_sf"/>
</dbReference>
<dbReference type="NCBIfam" id="TIGR00251">
    <property type="entry name" value="DUF167 family protein"/>
    <property type="match status" value="1"/>
</dbReference>
<dbReference type="NCBIfam" id="NF003466">
    <property type="entry name" value="PRK05090.1"/>
    <property type="match status" value="1"/>
</dbReference>
<dbReference type="PANTHER" id="PTHR13420">
    <property type="entry name" value="UPF0235 PROTEIN C15ORF40"/>
    <property type="match status" value="1"/>
</dbReference>
<dbReference type="PANTHER" id="PTHR13420:SF7">
    <property type="entry name" value="UPF0235 PROTEIN C15ORF40"/>
    <property type="match status" value="1"/>
</dbReference>
<dbReference type="Pfam" id="PF02594">
    <property type="entry name" value="DUF167"/>
    <property type="match status" value="1"/>
</dbReference>
<dbReference type="SMART" id="SM01152">
    <property type="entry name" value="DUF167"/>
    <property type="match status" value="1"/>
</dbReference>
<dbReference type="SUPFAM" id="SSF69786">
    <property type="entry name" value="YggU-like"/>
    <property type="match status" value="1"/>
</dbReference>
<organism>
    <name type="scientific">Tolumonas auensis (strain DSM 9187 / NBRC 110442 / TA 4)</name>
    <dbReference type="NCBI Taxonomy" id="595494"/>
    <lineage>
        <taxon>Bacteria</taxon>
        <taxon>Pseudomonadati</taxon>
        <taxon>Pseudomonadota</taxon>
        <taxon>Gammaproteobacteria</taxon>
        <taxon>Aeromonadales</taxon>
        <taxon>Aeromonadaceae</taxon>
        <taxon>Tolumonas</taxon>
    </lineage>
</organism>
<protein>
    <recommendedName>
        <fullName evidence="1">UPF0235 protein Tola_0962</fullName>
    </recommendedName>
</protein>
<keyword id="KW-1185">Reference proteome</keyword>
<proteinExistence type="inferred from homology"/>
<comment type="similarity">
    <text evidence="1">Belongs to the UPF0235 family.</text>
</comment>